<reference key="1">
    <citation type="submission" date="2006-01" db="EMBL/GenBank/DDBJ databases">
        <title>Complete sequence of Anaeromyxobacter dehalogenans 2CP-C.</title>
        <authorList>
            <person name="Copeland A."/>
            <person name="Lucas S."/>
            <person name="Lapidus A."/>
            <person name="Barry K."/>
            <person name="Detter J.C."/>
            <person name="Glavina T."/>
            <person name="Hammon N."/>
            <person name="Israni S."/>
            <person name="Pitluck S."/>
            <person name="Brettin T."/>
            <person name="Bruce D."/>
            <person name="Han C."/>
            <person name="Tapia R."/>
            <person name="Gilna P."/>
            <person name="Kiss H."/>
            <person name="Schmutz J."/>
            <person name="Larimer F."/>
            <person name="Land M."/>
            <person name="Kyrpides N."/>
            <person name="Anderson I."/>
            <person name="Sanford R.A."/>
            <person name="Ritalahti K.M."/>
            <person name="Thomas H.S."/>
            <person name="Kirby J.R."/>
            <person name="Zhulin I.B."/>
            <person name="Loeffler F.E."/>
            <person name="Richardson P."/>
        </authorList>
    </citation>
    <scope>NUCLEOTIDE SEQUENCE [LARGE SCALE GENOMIC DNA]</scope>
    <source>
        <strain>2CP-C</strain>
    </source>
</reference>
<protein>
    <recommendedName>
        <fullName evidence="1">Elongation factor G 2</fullName>
        <shortName evidence="1">EF-G 2</shortName>
    </recommendedName>
</protein>
<evidence type="ECO:0000255" key="1">
    <source>
        <dbReference type="HAMAP-Rule" id="MF_00054"/>
    </source>
</evidence>
<comment type="function">
    <text evidence="1">Catalyzes the GTP-dependent ribosomal translocation step during translation elongation. During this step, the ribosome changes from the pre-translocational (PRE) to the post-translocational (POST) state as the newly formed A-site-bound peptidyl-tRNA and P-site-bound deacylated tRNA move to the P and E sites, respectively. Catalyzes the coordinated movement of the two tRNA molecules, the mRNA and conformational changes in the ribosome.</text>
</comment>
<comment type="subcellular location">
    <subcellularLocation>
        <location evidence="1">Cytoplasm</location>
    </subcellularLocation>
</comment>
<comment type="similarity">
    <text evidence="1">Belongs to the TRAFAC class translation factor GTPase superfamily. Classic translation factor GTPase family. EF-G/EF-2 subfamily.</text>
</comment>
<keyword id="KW-0963">Cytoplasm</keyword>
<keyword id="KW-0251">Elongation factor</keyword>
<keyword id="KW-0342">GTP-binding</keyword>
<keyword id="KW-0547">Nucleotide-binding</keyword>
<keyword id="KW-0648">Protein biosynthesis</keyword>
<keyword id="KW-1185">Reference proteome</keyword>
<organism>
    <name type="scientific">Anaeromyxobacter dehalogenans (strain 2CP-C)</name>
    <dbReference type="NCBI Taxonomy" id="290397"/>
    <lineage>
        <taxon>Bacteria</taxon>
        <taxon>Pseudomonadati</taxon>
        <taxon>Myxococcota</taxon>
        <taxon>Myxococcia</taxon>
        <taxon>Myxococcales</taxon>
        <taxon>Cystobacterineae</taxon>
        <taxon>Anaeromyxobacteraceae</taxon>
        <taxon>Anaeromyxobacter</taxon>
    </lineage>
</organism>
<proteinExistence type="inferred from homology"/>
<gene>
    <name evidence="1" type="primary">fusA2</name>
    <name type="ordered locus">Adeh_2292</name>
</gene>
<sequence>MYTDFSKLRNIGISAHIDSGKTTLTERILFYTKRIHAIHEVKGKDGVGATMDSMELERERGITIASAATHCEWKGLHLNIIDTPGHVDFTIEVERSLRVLDGAILVLCSVAGVQSQSLTVDRQMRRYNVPRLAFVNKCDRSGANPIRVKDQLREKLQHNPVLMQLPIGLEDKFEGVVDLVKMKAFRFSGDDGEVITESEIPADMQADAARAREELLDAASMFSDELTDAILEDRVTEELIKAAVRKGTLALKLTPVFMGSAYKNKAVQKLLDGVVDYLPDPTEVVNEAHDLTKDEEKVALTIDNEKPTVALAFKLEDGRYGQLTYLRIYQGKLSRDMFITNMRTKKDHRIGRLVRMHSDQMEDIDAAGSGDIVAMFGVDCNSGDTFTDGTVKLNMTSMHVPEPVIALSIKPVDSKSETNMGKALRRFTREDPTFRAGLDEESGETIIRGMGELHLEVYIERMKREYNCIVEVSPPQVAYRETVSQRADFAYTHKKQTGGSGQFGRVCGYIEPCEQQFEFVDDVVGGAIPREFISAVEKGFRSMLAKGRLLGFPVVNTRVVINDGASHAVDSSDIAFQEAARGAWREGFDRAKPRLLEPIMRVVCEGPAEFSGGILGTLMQRRAMIIGSQDDGGLARIEAEVPLAEMFGYSTTLRSATQGKAEFSMEFSRYLPVPAAMAEELMTKASKKAEGGKK</sequence>
<dbReference type="EMBL" id="CP000251">
    <property type="protein sequence ID" value="ABC82062.1"/>
    <property type="molecule type" value="Genomic_DNA"/>
</dbReference>
<dbReference type="RefSeq" id="WP_011421344.1">
    <property type="nucleotide sequence ID" value="NC_007760.1"/>
</dbReference>
<dbReference type="SMR" id="Q2IK81"/>
<dbReference type="STRING" id="290397.Adeh_2292"/>
<dbReference type="KEGG" id="ade:Adeh_2292"/>
<dbReference type="eggNOG" id="COG0480">
    <property type="taxonomic scope" value="Bacteria"/>
</dbReference>
<dbReference type="HOGENOM" id="CLU_002794_4_1_7"/>
<dbReference type="OrthoDB" id="9760518at2"/>
<dbReference type="Proteomes" id="UP000001935">
    <property type="component" value="Chromosome"/>
</dbReference>
<dbReference type="GO" id="GO:0005737">
    <property type="term" value="C:cytoplasm"/>
    <property type="evidence" value="ECO:0007669"/>
    <property type="project" value="UniProtKB-SubCell"/>
</dbReference>
<dbReference type="GO" id="GO:0005525">
    <property type="term" value="F:GTP binding"/>
    <property type="evidence" value="ECO:0007669"/>
    <property type="project" value="UniProtKB-UniRule"/>
</dbReference>
<dbReference type="GO" id="GO:0003924">
    <property type="term" value="F:GTPase activity"/>
    <property type="evidence" value="ECO:0007669"/>
    <property type="project" value="InterPro"/>
</dbReference>
<dbReference type="GO" id="GO:0003746">
    <property type="term" value="F:translation elongation factor activity"/>
    <property type="evidence" value="ECO:0007669"/>
    <property type="project" value="UniProtKB-UniRule"/>
</dbReference>
<dbReference type="CDD" id="cd01886">
    <property type="entry name" value="EF-G"/>
    <property type="match status" value="1"/>
</dbReference>
<dbReference type="CDD" id="cd16262">
    <property type="entry name" value="EFG_III"/>
    <property type="match status" value="1"/>
</dbReference>
<dbReference type="CDD" id="cd01434">
    <property type="entry name" value="EFG_mtEFG1_IV"/>
    <property type="match status" value="1"/>
</dbReference>
<dbReference type="CDD" id="cd04091">
    <property type="entry name" value="mtEFG1_II_like"/>
    <property type="match status" value="1"/>
</dbReference>
<dbReference type="FunFam" id="3.30.230.10:FF:000003">
    <property type="entry name" value="Elongation factor G"/>
    <property type="match status" value="1"/>
</dbReference>
<dbReference type="FunFam" id="3.30.70.240:FF:000001">
    <property type="entry name" value="Elongation factor G"/>
    <property type="match status" value="1"/>
</dbReference>
<dbReference type="FunFam" id="3.30.70.870:FF:000001">
    <property type="entry name" value="Elongation factor G"/>
    <property type="match status" value="1"/>
</dbReference>
<dbReference type="FunFam" id="3.40.50.300:FF:000029">
    <property type="entry name" value="Elongation factor G"/>
    <property type="match status" value="1"/>
</dbReference>
<dbReference type="FunFam" id="2.40.30.10:FF:000022">
    <property type="entry name" value="Elongation factor G, mitochondrial"/>
    <property type="match status" value="1"/>
</dbReference>
<dbReference type="Gene3D" id="3.30.230.10">
    <property type="match status" value="1"/>
</dbReference>
<dbReference type="Gene3D" id="3.30.70.240">
    <property type="match status" value="1"/>
</dbReference>
<dbReference type="Gene3D" id="3.30.70.870">
    <property type="entry name" value="Elongation Factor G (Translational Gtpase), domain 3"/>
    <property type="match status" value="1"/>
</dbReference>
<dbReference type="Gene3D" id="3.40.50.300">
    <property type="entry name" value="P-loop containing nucleotide triphosphate hydrolases"/>
    <property type="match status" value="1"/>
</dbReference>
<dbReference type="Gene3D" id="2.40.30.10">
    <property type="entry name" value="Translation factors"/>
    <property type="match status" value="1"/>
</dbReference>
<dbReference type="HAMAP" id="MF_00054_B">
    <property type="entry name" value="EF_G_EF_2_B"/>
    <property type="match status" value="1"/>
</dbReference>
<dbReference type="InterPro" id="IPR041095">
    <property type="entry name" value="EFG_II"/>
</dbReference>
<dbReference type="InterPro" id="IPR009022">
    <property type="entry name" value="EFG_III"/>
</dbReference>
<dbReference type="InterPro" id="IPR035647">
    <property type="entry name" value="EFG_III/V"/>
</dbReference>
<dbReference type="InterPro" id="IPR047872">
    <property type="entry name" value="EFG_IV"/>
</dbReference>
<dbReference type="InterPro" id="IPR000640">
    <property type="entry name" value="EFG_V-like"/>
</dbReference>
<dbReference type="InterPro" id="IPR004161">
    <property type="entry name" value="EFTu-like_2"/>
</dbReference>
<dbReference type="InterPro" id="IPR031157">
    <property type="entry name" value="G_TR_CS"/>
</dbReference>
<dbReference type="InterPro" id="IPR027417">
    <property type="entry name" value="P-loop_NTPase"/>
</dbReference>
<dbReference type="InterPro" id="IPR020568">
    <property type="entry name" value="Ribosomal_Su5_D2-typ_SF"/>
</dbReference>
<dbReference type="InterPro" id="IPR014721">
    <property type="entry name" value="Ribsml_uS5_D2-typ_fold_subgr"/>
</dbReference>
<dbReference type="InterPro" id="IPR005225">
    <property type="entry name" value="Small_GTP-bd"/>
</dbReference>
<dbReference type="InterPro" id="IPR000795">
    <property type="entry name" value="T_Tr_GTP-bd_dom"/>
</dbReference>
<dbReference type="InterPro" id="IPR009000">
    <property type="entry name" value="Transl_B-barrel_sf"/>
</dbReference>
<dbReference type="InterPro" id="IPR004540">
    <property type="entry name" value="Transl_elong_EFG/EF2"/>
</dbReference>
<dbReference type="InterPro" id="IPR005517">
    <property type="entry name" value="Transl_elong_EFG/EF2_IV"/>
</dbReference>
<dbReference type="NCBIfam" id="TIGR00484">
    <property type="entry name" value="EF-G"/>
    <property type="match status" value="1"/>
</dbReference>
<dbReference type="NCBIfam" id="NF009381">
    <property type="entry name" value="PRK12740.1-5"/>
    <property type="match status" value="1"/>
</dbReference>
<dbReference type="NCBIfam" id="TIGR00231">
    <property type="entry name" value="small_GTP"/>
    <property type="match status" value="1"/>
</dbReference>
<dbReference type="PANTHER" id="PTHR43636">
    <property type="entry name" value="ELONGATION FACTOR G, MITOCHONDRIAL"/>
    <property type="match status" value="1"/>
</dbReference>
<dbReference type="PANTHER" id="PTHR43636:SF2">
    <property type="entry name" value="ELONGATION FACTOR G, MITOCHONDRIAL"/>
    <property type="match status" value="1"/>
</dbReference>
<dbReference type="Pfam" id="PF00679">
    <property type="entry name" value="EFG_C"/>
    <property type="match status" value="1"/>
</dbReference>
<dbReference type="Pfam" id="PF14492">
    <property type="entry name" value="EFG_III"/>
    <property type="match status" value="1"/>
</dbReference>
<dbReference type="Pfam" id="PF03764">
    <property type="entry name" value="EFG_IV"/>
    <property type="match status" value="1"/>
</dbReference>
<dbReference type="Pfam" id="PF00009">
    <property type="entry name" value="GTP_EFTU"/>
    <property type="match status" value="1"/>
</dbReference>
<dbReference type="Pfam" id="PF03144">
    <property type="entry name" value="GTP_EFTU_D2"/>
    <property type="match status" value="1"/>
</dbReference>
<dbReference type="PRINTS" id="PR00315">
    <property type="entry name" value="ELONGATNFCT"/>
</dbReference>
<dbReference type="SMART" id="SM00838">
    <property type="entry name" value="EFG_C"/>
    <property type="match status" value="1"/>
</dbReference>
<dbReference type="SMART" id="SM00889">
    <property type="entry name" value="EFG_IV"/>
    <property type="match status" value="1"/>
</dbReference>
<dbReference type="SUPFAM" id="SSF54980">
    <property type="entry name" value="EF-G C-terminal domain-like"/>
    <property type="match status" value="2"/>
</dbReference>
<dbReference type="SUPFAM" id="SSF52540">
    <property type="entry name" value="P-loop containing nucleoside triphosphate hydrolases"/>
    <property type="match status" value="1"/>
</dbReference>
<dbReference type="SUPFAM" id="SSF54211">
    <property type="entry name" value="Ribosomal protein S5 domain 2-like"/>
    <property type="match status" value="1"/>
</dbReference>
<dbReference type="SUPFAM" id="SSF50447">
    <property type="entry name" value="Translation proteins"/>
    <property type="match status" value="1"/>
</dbReference>
<dbReference type="PROSITE" id="PS00301">
    <property type="entry name" value="G_TR_1"/>
    <property type="match status" value="1"/>
</dbReference>
<dbReference type="PROSITE" id="PS51722">
    <property type="entry name" value="G_TR_2"/>
    <property type="match status" value="1"/>
</dbReference>
<accession>Q2IK81</accession>
<name>EFG2_ANADE</name>
<feature type="chain" id="PRO_0000263424" description="Elongation factor G 2">
    <location>
        <begin position="1"/>
        <end position="694"/>
    </location>
</feature>
<feature type="domain" description="tr-type G">
    <location>
        <begin position="6"/>
        <end position="282"/>
    </location>
</feature>
<feature type="binding site" evidence="1">
    <location>
        <begin position="15"/>
        <end position="22"/>
    </location>
    <ligand>
        <name>GTP</name>
        <dbReference type="ChEBI" id="CHEBI:37565"/>
    </ligand>
</feature>
<feature type="binding site" evidence="1">
    <location>
        <begin position="82"/>
        <end position="86"/>
    </location>
    <ligand>
        <name>GTP</name>
        <dbReference type="ChEBI" id="CHEBI:37565"/>
    </ligand>
</feature>
<feature type="binding site" evidence="1">
    <location>
        <begin position="136"/>
        <end position="139"/>
    </location>
    <ligand>
        <name>GTP</name>
        <dbReference type="ChEBI" id="CHEBI:37565"/>
    </ligand>
</feature>